<name>AC4CH_SHEON</name>
<comment type="function">
    <text evidence="2">Catalyzes the hydrolysis of N(4)-acetylcytidine (ac4C).</text>
</comment>
<comment type="catalytic activity">
    <reaction evidence="2">
        <text>N(4)-acetylcytidine + H2O = cytidine + acetate + H(+)</text>
        <dbReference type="Rhea" id="RHEA:62932"/>
        <dbReference type="ChEBI" id="CHEBI:15377"/>
        <dbReference type="ChEBI" id="CHEBI:15378"/>
        <dbReference type="ChEBI" id="CHEBI:17562"/>
        <dbReference type="ChEBI" id="CHEBI:30089"/>
        <dbReference type="ChEBI" id="CHEBI:70989"/>
        <dbReference type="EC" id="3.5.1.135"/>
    </reaction>
</comment>
<comment type="catalytic activity">
    <reaction evidence="2">
        <text>N(4)-acetyl-2'-deoxycytidine + H2O = 2'-deoxycytidine + acetate + H(+)</text>
        <dbReference type="Rhea" id="RHEA:62936"/>
        <dbReference type="ChEBI" id="CHEBI:15377"/>
        <dbReference type="ChEBI" id="CHEBI:15378"/>
        <dbReference type="ChEBI" id="CHEBI:15698"/>
        <dbReference type="ChEBI" id="CHEBI:30089"/>
        <dbReference type="ChEBI" id="CHEBI:146133"/>
        <dbReference type="EC" id="3.5.1.135"/>
    </reaction>
</comment>
<comment type="catalytic activity">
    <reaction evidence="2">
        <text>N(4)-acetylcytosine + H2O = cytosine + acetate + H(+)</text>
        <dbReference type="Rhea" id="RHEA:62940"/>
        <dbReference type="ChEBI" id="CHEBI:15377"/>
        <dbReference type="ChEBI" id="CHEBI:15378"/>
        <dbReference type="ChEBI" id="CHEBI:16040"/>
        <dbReference type="ChEBI" id="CHEBI:30089"/>
        <dbReference type="ChEBI" id="CHEBI:146134"/>
        <dbReference type="EC" id="3.5.1.135"/>
    </reaction>
</comment>
<comment type="similarity">
    <text evidence="2">Belongs to the N(4)-acetylcytidine amidohydrolase family.</text>
</comment>
<reference key="1">
    <citation type="journal article" date="2002" name="Nat. Biotechnol.">
        <title>Genome sequence of the dissimilatory metal ion-reducing bacterium Shewanella oneidensis.</title>
        <authorList>
            <person name="Heidelberg J.F."/>
            <person name="Paulsen I.T."/>
            <person name="Nelson K.E."/>
            <person name="Gaidos E.J."/>
            <person name="Nelson W.C."/>
            <person name="Read T.D."/>
            <person name="Eisen J.A."/>
            <person name="Seshadri R."/>
            <person name="Ward N.L."/>
            <person name="Methe B.A."/>
            <person name="Clayton R.A."/>
            <person name="Meyer T."/>
            <person name="Tsapin A."/>
            <person name="Scott J."/>
            <person name="Beanan M.J."/>
            <person name="Brinkac L.M."/>
            <person name="Daugherty S.C."/>
            <person name="DeBoy R.T."/>
            <person name="Dodson R.J."/>
            <person name="Durkin A.S."/>
            <person name="Haft D.H."/>
            <person name="Kolonay J.F."/>
            <person name="Madupu R."/>
            <person name="Peterson J.D."/>
            <person name="Umayam L.A."/>
            <person name="White O."/>
            <person name="Wolf A.M."/>
            <person name="Vamathevan J.J."/>
            <person name="Weidman J.F."/>
            <person name="Impraim M."/>
            <person name="Lee K."/>
            <person name="Berry K.J."/>
            <person name="Lee C."/>
            <person name="Mueller J."/>
            <person name="Khouri H.M."/>
            <person name="Gill J."/>
            <person name="Utterback T.R."/>
            <person name="McDonald L.A."/>
            <person name="Feldblyum T.V."/>
            <person name="Smith H.O."/>
            <person name="Venter J.C."/>
            <person name="Nealson K.H."/>
            <person name="Fraser C.M."/>
        </authorList>
    </citation>
    <scope>NUCLEOTIDE SEQUENCE [LARGE SCALE GENOMIC DNA]</scope>
    <source>
        <strain>ATCC 700550 / JCM 31522 / CIP 106686 / LMG 19005 / NCIMB 14063 / MR-1</strain>
    </source>
</reference>
<proteinExistence type="inferred from homology"/>
<gene>
    <name type="ordered locus">SO_1922</name>
</gene>
<feature type="chain" id="PRO_0000214607" description="N(4)-acetylcytidine amidohydrolase">
    <location>
        <begin position="1"/>
        <end position="104"/>
    </location>
</feature>
<feature type="domain" description="ASCH" evidence="1">
    <location>
        <begin position="6"/>
        <end position="101"/>
    </location>
</feature>
<feature type="active site" description="Proton acceptor" evidence="2">
    <location>
        <position position="20"/>
    </location>
</feature>
<feature type="active site" description="Nucleophile" evidence="2">
    <location>
        <position position="23"/>
    </location>
</feature>
<feature type="active site" description="Proton donor" evidence="2">
    <location>
        <position position="73"/>
    </location>
</feature>
<organism>
    <name type="scientific">Shewanella oneidensis (strain ATCC 700550 / JCM 31522 / CIP 106686 / LMG 19005 / NCIMB 14063 / MR-1)</name>
    <dbReference type="NCBI Taxonomy" id="211586"/>
    <lineage>
        <taxon>Bacteria</taxon>
        <taxon>Pseudomonadati</taxon>
        <taxon>Pseudomonadota</taxon>
        <taxon>Gammaproteobacteria</taxon>
        <taxon>Alteromonadales</taxon>
        <taxon>Shewanellaceae</taxon>
        <taxon>Shewanella</taxon>
    </lineage>
</organism>
<evidence type="ECO:0000255" key="1"/>
<evidence type="ECO:0000255" key="2">
    <source>
        <dbReference type="HAMAP-Rule" id="MF_00684"/>
    </source>
</evidence>
<protein>
    <recommendedName>
        <fullName evidence="2">N(4)-acetylcytidine amidohydrolase</fullName>
        <shortName evidence="2">ac4C amidohydrolase</shortName>
        <ecNumber evidence="2">3.5.1.135</ecNumber>
    </recommendedName>
</protein>
<accession>Q8EFP8</accession>
<dbReference type="EC" id="3.5.1.135" evidence="2"/>
<dbReference type="EMBL" id="AE014299">
    <property type="protein sequence ID" value="AAN54973.1"/>
    <property type="molecule type" value="Genomic_DNA"/>
</dbReference>
<dbReference type="RefSeq" id="NP_717529.1">
    <property type="nucleotide sequence ID" value="NC_004347.2"/>
</dbReference>
<dbReference type="RefSeq" id="WP_011072021.1">
    <property type="nucleotide sequence ID" value="NC_004347.2"/>
</dbReference>
<dbReference type="SMR" id="Q8EFP8"/>
<dbReference type="STRING" id="211586.SO_1922"/>
<dbReference type="PaxDb" id="211586-SO_1922"/>
<dbReference type="KEGG" id="son:SO_1922"/>
<dbReference type="PATRIC" id="fig|211586.12.peg.1847"/>
<dbReference type="eggNOG" id="COG3097">
    <property type="taxonomic scope" value="Bacteria"/>
</dbReference>
<dbReference type="HOGENOM" id="CLU_152586_0_0_6"/>
<dbReference type="OrthoDB" id="8590202at2"/>
<dbReference type="PhylomeDB" id="Q8EFP8"/>
<dbReference type="BioCyc" id="SONE211586:G1GMP-1771-MONOMER"/>
<dbReference type="Proteomes" id="UP000008186">
    <property type="component" value="Chromosome"/>
</dbReference>
<dbReference type="GO" id="GO:0005829">
    <property type="term" value="C:cytosol"/>
    <property type="evidence" value="ECO:0000318"/>
    <property type="project" value="GO_Central"/>
</dbReference>
<dbReference type="GO" id="GO:0016813">
    <property type="term" value="F:hydrolase activity, acting on carbon-nitrogen (but not peptide) bonds, in linear amidines"/>
    <property type="evidence" value="ECO:0007669"/>
    <property type="project" value="UniProtKB-UniRule"/>
</dbReference>
<dbReference type="GO" id="GO:0106251">
    <property type="term" value="F:N4-acetylcytidine amidohydrolase activity"/>
    <property type="evidence" value="ECO:0007669"/>
    <property type="project" value="RHEA"/>
</dbReference>
<dbReference type="CDD" id="cd06552">
    <property type="entry name" value="ASCH_yqfb_like"/>
    <property type="match status" value="1"/>
</dbReference>
<dbReference type="FunFam" id="2.30.130.30:FF:000001">
    <property type="entry name" value="UPF0267 protein YqfB"/>
    <property type="match status" value="1"/>
</dbReference>
<dbReference type="Gene3D" id="2.30.130.30">
    <property type="entry name" value="Hypothetical protein"/>
    <property type="match status" value="1"/>
</dbReference>
<dbReference type="HAMAP" id="MF_00684">
    <property type="entry name" value="ac4C_amidohydr"/>
    <property type="match status" value="1"/>
</dbReference>
<dbReference type="InterPro" id="IPR008314">
    <property type="entry name" value="AC4CH"/>
</dbReference>
<dbReference type="InterPro" id="IPR007374">
    <property type="entry name" value="ASCH_domain"/>
</dbReference>
<dbReference type="InterPro" id="IPR015947">
    <property type="entry name" value="PUA-like_sf"/>
</dbReference>
<dbReference type="NCBIfam" id="NF003443">
    <property type="entry name" value="PRK04980.1"/>
    <property type="match status" value="1"/>
</dbReference>
<dbReference type="PANTHER" id="PTHR38088">
    <property type="entry name" value="UCP029143 FAMILY PROTEIN"/>
    <property type="match status" value="1"/>
</dbReference>
<dbReference type="PANTHER" id="PTHR38088:SF2">
    <property type="entry name" value="UCP029143 FAMILY PROTEIN"/>
    <property type="match status" value="1"/>
</dbReference>
<dbReference type="Pfam" id="PF04266">
    <property type="entry name" value="ASCH"/>
    <property type="match status" value="1"/>
</dbReference>
<dbReference type="PIRSF" id="PIRSF029143">
    <property type="entry name" value="UCP029143"/>
    <property type="match status" value="1"/>
</dbReference>
<dbReference type="SMART" id="SM01022">
    <property type="entry name" value="ASCH"/>
    <property type="match status" value="1"/>
</dbReference>
<dbReference type="SUPFAM" id="SSF88697">
    <property type="entry name" value="PUA domain-like"/>
    <property type="match status" value="1"/>
</dbReference>
<keyword id="KW-0378">Hydrolase</keyword>
<keyword id="KW-1185">Reference proteome</keyword>
<sequence>MLTEITFFERFEHDILMGKKTITLRNEAESHVIPGQILPVSTFETHRWFCDIQVLEVTPITLSGLTTLHAQQENMTLAELRLVIAEIYPDLEQLYMIRFKVLTK</sequence>